<keyword id="KW-0963">Cytoplasm</keyword>
<keyword id="KW-0210">Decarboxylase</keyword>
<keyword id="KW-0312">Gluconeogenesis</keyword>
<keyword id="KW-0342">GTP-binding</keyword>
<keyword id="KW-0456">Lyase</keyword>
<keyword id="KW-0464">Manganese</keyword>
<keyword id="KW-0479">Metal-binding</keyword>
<keyword id="KW-0547">Nucleotide-binding</keyword>
<keyword id="KW-1185">Reference proteome</keyword>
<protein>
    <recommendedName>
        <fullName evidence="1">Phosphoenolpyruvate carboxykinase [GTP]</fullName>
        <shortName evidence="1">PEP carboxykinase</shortName>
        <shortName evidence="1">PEPCK</shortName>
        <ecNumber evidence="1">4.1.1.32</ecNumber>
    </recommendedName>
</protein>
<organism>
    <name type="scientific">Frankia casuarinae (strain DSM 45818 / CECT 9043 / HFP020203 / CcI3)</name>
    <dbReference type="NCBI Taxonomy" id="106370"/>
    <lineage>
        <taxon>Bacteria</taxon>
        <taxon>Bacillati</taxon>
        <taxon>Actinomycetota</taxon>
        <taxon>Actinomycetes</taxon>
        <taxon>Frankiales</taxon>
        <taxon>Frankiaceae</taxon>
        <taxon>Frankia</taxon>
    </lineage>
</organism>
<dbReference type="EC" id="4.1.1.32" evidence="1"/>
<dbReference type="EMBL" id="CP000249">
    <property type="protein sequence ID" value="ABD13247.1"/>
    <property type="molecule type" value="Genomic_DNA"/>
</dbReference>
<dbReference type="RefSeq" id="WP_011438271.1">
    <property type="nucleotide sequence ID" value="NZ_JENI01000003.1"/>
</dbReference>
<dbReference type="SMR" id="Q2J645"/>
<dbReference type="STRING" id="106370.Francci3_3897"/>
<dbReference type="KEGG" id="fra:Francci3_3897"/>
<dbReference type="eggNOG" id="COG1274">
    <property type="taxonomic scope" value="Bacteria"/>
</dbReference>
<dbReference type="HOGENOM" id="CLU_028872_1_1_11"/>
<dbReference type="OrthoDB" id="9758871at2"/>
<dbReference type="PhylomeDB" id="Q2J645"/>
<dbReference type="UniPathway" id="UPA00138"/>
<dbReference type="Proteomes" id="UP000001937">
    <property type="component" value="Chromosome"/>
</dbReference>
<dbReference type="GO" id="GO:0005829">
    <property type="term" value="C:cytosol"/>
    <property type="evidence" value="ECO:0007669"/>
    <property type="project" value="TreeGrafter"/>
</dbReference>
<dbReference type="GO" id="GO:0005525">
    <property type="term" value="F:GTP binding"/>
    <property type="evidence" value="ECO:0007669"/>
    <property type="project" value="UniProtKB-UniRule"/>
</dbReference>
<dbReference type="GO" id="GO:0030145">
    <property type="term" value="F:manganese ion binding"/>
    <property type="evidence" value="ECO:0007669"/>
    <property type="project" value="UniProtKB-UniRule"/>
</dbReference>
<dbReference type="GO" id="GO:0004613">
    <property type="term" value="F:phosphoenolpyruvate carboxykinase (GTP) activity"/>
    <property type="evidence" value="ECO:0007669"/>
    <property type="project" value="UniProtKB-UniRule"/>
</dbReference>
<dbReference type="GO" id="GO:0071333">
    <property type="term" value="P:cellular response to glucose stimulus"/>
    <property type="evidence" value="ECO:0007669"/>
    <property type="project" value="TreeGrafter"/>
</dbReference>
<dbReference type="GO" id="GO:0006094">
    <property type="term" value="P:gluconeogenesis"/>
    <property type="evidence" value="ECO:0007669"/>
    <property type="project" value="UniProtKB-UniRule"/>
</dbReference>
<dbReference type="GO" id="GO:0046327">
    <property type="term" value="P:glycerol biosynthetic process from pyruvate"/>
    <property type="evidence" value="ECO:0007669"/>
    <property type="project" value="TreeGrafter"/>
</dbReference>
<dbReference type="GO" id="GO:0006107">
    <property type="term" value="P:oxaloacetate metabolic process"/>
    <property type="evidence" value="ECO:0007669"/>
    <property type="project" value="TreeGrafter"/>
</dbReference>
<dbReference type="GO" id="GO:0019543">
    <property type="term" value="P:propionate catabolic process"/>
    <property type="evidence" value="ECO:0007669"/>
    <property type="project" value="TreeGrafter"/>
</dbReference>
<dbReference type="GO" id="GO:0033993">
    <property type="term" value="P:response to lipid"/>
    <property type="evidence" value="ECO:0007669"/>
    <property type="project" value="TreeGrafter"/>
</dbReference>
<dbReference type="GO" id="GO:0042594">
    <property type="term" value="P:response to starvation"/>
    <property type="evidence" value="ECO:0007669"/>
    <property type="project" value="TreeGrafter"/>
</dbReference>
<dbReference type="CDD" id="cd00819">
    <property type="entry name" value="PEPCK_GTP"/>
    <property type="match status" value="1"/>
</dbReference>
<dbReference type="FunFam" id="3.40.449.10:FF:000005">
    <property type="entry name" value="Phosphoenolpyruvate carboxykinase [GTP]"/>
    <property type="match status" value="1"/>
</dbReference>
<dbReference type="Gene3D" id="3.90.228.20">
    <property type="match status" value="1"/>
</dbReference>
<dbReference type="Gene3D" id="3.40.449.10">
    <property type="entry name" value="Phosphoenolpyruvate Carboxykinase, domain 1"/>
    <property type="match status" value="1"/>
</dbReference>
<dbReference type="Gene3D" id="2.170.8.10">
    <property type="entry name" value="Phosphoenolpyruvate Carboxykinase, domain 2"/>
    <property type="match status" value="1"/>
</dbReference>
<dbReference type="HAMAP" id="MF_00452">
    <property type="entry name" value="PEPCK_GTP"/>
    <property type="match status" value="1"/>
</dbReference>
<dbReference type="InterPro" id="IPR018091">
    <property type="entry name" value="PEP_carboxykin_GTP_CS"/>
</dbReference>
<dbReference type="InterPro" id="IPR013035">
    <property type="entry name" value="PEP_carboxykinase_C"/>
</dbReference>
<dbReference type="InterPro" id="IPR008209">
    <property type="entry name" value="PEP_carboxykinase_GTP"/>
</dbReference>
<dbReference type="InterPro" id="IPR035077">
    <property type="entry name" value="PEP_carboxykinase_GTP_C"/>
</dbReference>
<dbReference type="InterPro" id="IPR035078">
    <property type="entry name" value="PEP_carboxykinase_GTP_N"/>
</dbReference>
<dbReference type="InterPro" id="IPR008210">
    <property type="entry name" value="PEP_carboxykinase_N"/>
</dbReference>
<dbReference type="NCBIfam" id="NF003253">
    <property type="entry name" value="PRK04210.1"/>
    <property type="match status" value="1"/>
</dbReference>
<dbReference type="PANTHER" id="PTHR11561">
    <property type="entry name" value="PHOSPHOENOLPYRUVATE CARBOXYKINASE"/>
    <property type="match status" value="1"/>
</dbReference>
<dbReference type="PANTHER" id="PTHR11561:SF0">
    <property type="entry name" value="PHOSPHOENOLPYRUVATE CARBOXYKINASE [GTP]-RELATED"/>
    <property type="match status" value="1"/>
</dbReference>
<dbReference type="Pfam" id="PF00821">
    <property type="entry name" value="PEPCK_GTP"/>
    <property type="match status" value="1"/>
</dbReference>
<dbReference type="Pfam" id="PF17297">
    <property type="entry name" value="PEPCK_N"/>
    <property type="match status" value="1"/>
</dbReference>
<dbReference type="PIRSF" id="PIRSF001348">
    <property type="entry name" value="PEP_carboxykinase_GTP"/>
    <property type="match status" value="1"/>
</dbReference>
<dbReference type="SUPFAM" id="SSF68923">
    <property type="entry name" value="PEP carboxykinase N-terminal domain"/>
    <property type="match status" value="1"/>
</dbReference>
<dbReference type="SUPFAM" id="SSF53795">
    <property type="entry name" value="PEP carboxykinase-like"/>
    <property type="match status" value="1"/>
</dbReference>
<dbReference type="PROSITE" id="PS00505">
    <property type="entry name" value="PEPCK_GTP"/>
    <property type="match status" value="1"/>
</dbReference>
<proteinExistence type="inferred from homology"/>
<evidence type="ECO:0000255" key="1">
    <source>
        <dbReference type="HAMAP-Rule" id="MF_00452"/>
    </source>
</evidence>
<reference key="1">
    <citation type="journal article" date="2007" name="Genome Res.">
        <title>Genome characteristics of facultatively symbiotic Frankia sp. strains reflect host range and host plant biogeography.</title>
        <authorList>
            <person name="Normand P."/>
            <person name="Lapierre P."/>
            <person name="Tisa L.S."/>
            <person name="Gogarten J.P."/>
            <person name="Alloisio N."/>
            <person name="Bagnarol E."/>
            <person name="Bassi C.A."/>
            <person name="Berry A.M."/>
            <person name="Bickhart D.M."/>
            <person name="Choisne N."/>
            <person name="Couloux A."/>
            <person name="Cournoyer B."/>
            <person name="Cruveiller S."/>
            <person name="Daubin V."/>
            <person name="Demange N."/>
            <person name="Francino M.P."/>
            <person name="Goltsman E."/>
            <person name="Huang Y."/>
            <person name="Kopp O.R."/>
            <person name="Labarre L."/>
            <person name="Lapidus A."/>
            <person name="Lavire C."/>
            <person name="Marechal J."/>
            <person name="Martinez M."/>
            <person name="Mastronunzio J.E."/>
            <person name="Mullin B.C."/>
            <person name="Niemann J."/>
            <person name="Pujic P."/>
            <person name="Rawnsley T."/>
            <person name="Rouy Z."/>
            <person name="Schenowitz C."/>
            <person name="Sellstedt A."/>
            <person name="Tavares F."/>
            <person name="Tomkins J.P."/>
            <person name="Vallenet D."/>
            <person name="Valverde C."/>
            <person name="Wall L.G."/>
            <person name="Wang Y."/>
            <person name="Medigue C."/>
            <person name="Benson D.R."/>
        </authorList>
    </citation>
    <scope>NUCLEOTIDE SEQUENCE [LARGE SCALE GENOMIC DNA]</scope>
    <source>
        <strain>DSM 45818 / CECT 9043 / HFP020203 / CcI3</strain>
    </source>
</reference>
<gene>
    <name evidence="1" type="primary">pckG</name>
    <name type="ordered locus">Francci3_3897</name>
</gene>
<accession>Q2J645</accession>
<name>PCKG_FRACC</name>
<comment type="function">
    <text evidence="1">Catalyzes the conversion of oxaloacetate (OAA) to phosphoenolpyruvate (PEP), the rate-limiting step in the metabolic pathway that produces glucose from lactate and other precursors derived from the citric acid cycle.</text>
</comment>
<comment type="catalytic activity">
    <reaction evidence="1">
        <text>oxaloacetate + GTP = phosphoenolpyruvate + GDP + CO2</text>
        <dbReference type="Rhea" id="RHEA:10388"/>
        <dbReference type="ChEBI" id="CHEBI:16452"/>
        <dbReference type="ChEBI" id="CHEBI:16526"/>
        <dbReference type="ChEBI" id="CHEBI:37565"/>
        <dbReference type="ChEBI" id="CHEBI:58189"/>
        <dbReference type="ChEBI" id="CHEBI:58702"/>
        <dbReference type="EC" id="4.1.1.32"/>
    </reaction>
</comment>
<comment type="cofactor">
    <cofactor evidence="1">
        <name>Mn(2+)</name>
        <dbReference type="ChEBI" id="CHEBI:29035"/>
    </cofactor>
    <text evidence="1">Binds 1 Mn(2+) ion per subunit.</text>
</comment>
<comment type="pathway">
    <text evidence="1">Carbohydrate biosynthesis; gluconeogenesis.</text>
</comment>
<comment type="subunit">
    <text evidence="1">Monomer.</text>
</comment>
<comment type="subcellular location">
    <subcellularLocation>
        <location evidence="1">Cytoplasm</location>
    </subcellularLocation>
</comment>
<comment type="similarity">
    <text evidence="1">Belongs to the phosphoenolpyruvate carboxykinase [GTP] family.</text>
</comment>
<sequence length="609" mass="66912">MTTAAQVSGLDVAPTRHARLVAWVREIAELTQPDRVEWCDGSEAEFDRLTSLLIEQGTLVRLNDEKRPNSFYAASDPGDVARVEDRTYICSEQAEDAGPTNNWLDPAEMRATLRGLFAGCMRGRTMYVVPFCMGPLGSRISALGVEITDSPYVVISMRTMTRMGTPALEQLGTDGFFVPAVHSLGAPLEPGQADVPWPCNTTKYITHFPETREIWSYGSGYGGNALLGKKCYALRIASVMARDEGWLAEHMLILKLTSPAGKVHYIAAAFPSACGKTNLAMLIPTLPGWQAETVGDDIAWMRFGEDGRLYAVNPEAGFFGVAPGTGEQTNPNAVRTLWGNAIYTNVARTDNGDVWWEGLTKQPPAHLIDWKGRDWTPESSEPAAHPNARFTVPAGQCPTIAPEWEDPRGVPISAILFGGRRATAVPLVTEAPDWRRGVFFGSIVASETTAAQAGAIGKLRRDPFAMLPFCGYNMADYFAHWLEVGQKADQTKLPRVYYVNWFRKSPEGRFLWPGFGDNSRVLAWIVGRLEGTAAGVETPLGVLPTKDALPVDGIDIAEEDLETLLTVDVEVWKQEAQLIPEHYQTFGERLPAALWTEHEALVERLNSAD</sequence>
<feature type="chain" id="PRO_1000060290" description="Phosphoenolpyruvate carboxykinase [GTP]">
    <location>
        <begin position="1"/>
        <end position="609"/>
    </location>
</feature>
<feature type="active site" evidence="1">
    <location>
        <position position="274"/>
    </location>
</feature>
<feature type="binding site" evidence="1">
    <location>
        <position position="82"/>
    </location>
    <ligand>
        <name>substrate</name>
    </ligand>
</feature>
<feature type="binding site" evidence="1">
    <location>
        <begin position="221"/>
        <end position="223"/>
    </location>
    <ligand>
        <name>substrate</name>
    </ligand>
</feature>
<feature type="binding site" evidence="1">
    <location>
        <position position="230"/>
    </location>
    <ligand>
        <name>Mn(2+)</name>
        <dbReference type="ChEBI" id="CHEBI:29035"/>
    </ligand>
</feature>
<feature type="binding site" evidence="1">
    <location>
        <position position="250"/>
    </location>
    <ligand>
        <name>Mn(2+)</name>
        <dbReference type="ChEBI" id="CHEBI:29035"/>
    </ligand>
</feature>
<feature type="binding site" evidence="1">
    <location>
        <position position="272"/>
    </location>
    <ligand>
        <name>substrate</name>
    </ligand>
</feature>
<feature type="binding site" evidence="1">
    <location>
        <begin position="273"/>
        <end position="278"/>
    </location>
    <ligand>
        <name>GTP</name>
        <dbReference type="ChEBI" id="CHEBI:37565"/>
    </ligand>
</feature>
<feature type="binding site" evidence="1">
    <location>
        <position position="297"/>
    </location>
    <ligand>
        <name>Mn(2+)</name>
        <dbReference type="ChEBI" id="CHEBI:29035"/>
    </ligand>
</feature>
<feature type="binding site" evidence="1">
    <location>
        <begin position="387"/>
        <end position="389"/>
    </location>
    <ligand>
        <name>substrate</name>
    </ligand>
</feature>
<feature type="binding site" evidence="1">
    <location>
        <position position="389"/>
    </location>
    <ligand>
        <name>GTP</name>
        <dbReference type="ChEBI" id="CHEBI:37565"/>
    </ligand>
</feature>
<feature type="binding site" evidence="1">
    <location>
        <position position="420"/>
    </location>
    <ligand>
        <name>GTP</name>
        <dbReference type="ChEBI" id="CHEBI:37565"/>
    </ligand>
</feature>
<feature type="binding site" evidence="1">
    <location>
        <begin position="515"/>
        <end position="518"/>
    </location>
    <ligand>
        <name>GTP</name>
        <dbReference type="ChEBI" id="CHEBI:37565"/>
    </ligand>
</feature>